<sequence>MKILVALAVFFLVSTQLFAEEIGANDDLNYWSDWYDSDQIKEELPEPFEHLLQRIARRPKPQQFFGLMGKRDADSSIEKQVALLKALYGHGQISHKRHKTDSFVGLMGKRALNSVAYERSAMQNYERRR</sequence>
<keyword id="KW-0002">3D-structure</keyword>
<keyword id="KW-0025">Alternative splicing</keyword>
<keyword id="KW-0027">Amidation</keyword>
<keyword id="KW-0165">Cleavage on pair of basic residues</keyword>
<keyword id="KW-0903">Direct protein sequencing</keyword>
<keyword id="KW-0527">Neuropeptide</keyword>
<keyword id="KW-0529">Neurotransmitter</keyword>
<keyword id="KW-1267">Proteomics identification</keyword>
<keyword id="KW-1185">Reference proteome</keyword>
<keyword id="KW-0964">Secreted</keyword>
<keyword id="KW-0732">Signal</keyword>
<organism>
    <name type="scientific">Homo sapiens</name>
    <name type="common">Human</name>
    <dbReference type="NCBI Taxonomy" id="9606"/>
    <lineage>
        <taxon>Eukaryota</taxon>
        <taxon>Metazoa</taxon>
        <taxon>Chordata</taxon>
        <taxon>Craniata</taxon>
        <taxon>Vertebrata</taxon>
        <taxon>Euteleostomi</taxon>
        <taxon>Mammalia</taxon>
        <taxon>Eutheria</taxon>
        <taxon>Euarchontoglires</taxon>
        <taxon>Primates</taxon>
        <taxon>Haplorrhini</taxon>
        <taxon>Catarrhini</taxon>
        <taxon>Hominidae</taxon>
        <taxon>Homo</taxon>
    </lineage>
</organism>
<name>TKN1_HUMAN</name>
<proteinExistence type="evidence at protein level"/>
<evidence type="ECO:0000255" key="1"/>
<evidence type="ECO:0000269" key="2">
    <source>
    </source>
</evidence>
<evidence type="ECO:0000269" key="3">
    <source>
    </source>
</evidence>
<evidence type="ECO:0000269" key="4">
    <source>
    </source>
</evidence>
<evidence type="ECO:0000269" key="5">
    <source>
    </source>
</evidence>
<evidence type="ECO:0000303" key="6">
    <source>
    </source>
</evidence>
<evidence type="ECO:0000303" key="7">
    <source>
    </source>
</evidence>
<evidence type="ECO:0000303" key="8">
    <source>
    </source>
</evidence>
<evidence type="ECO:0000305" key="9"/>
<evidence type="ECO:0007829" key="10">
    <source>
        <dbReference type="PDB" id="2B19"/>
    </source>
</evidence>
<evidence type="ECO:0007829" key="11">
    <source>
        <dbReference type="PDB" id="2KS9"/>
    </source>
</evidence>
<evidence type="ECO:0007829" key="12">
    <source>
        <dbReference type="PDB" id="2KSB"/>
    </source>
</evidence>
<feature type="signal peptide" evidence="1">
    <location>
        <begin position="1"/>
        <end position="19"/>
    </location>
</feature>
<feature type="propeptide" id="PRO_0000033529" evidence="1">
    <location>
        <begin position="20"/>
        <end position="56"/>
    </location>
</feature>
<feature type="peptide" id="PRO_0000033530" description="Substance P">
    <location>
        <begin position="58"/>
        <end position="68"/>
    </location>
</feature>
<feature type="peptide" id="PRO_0000033531" description="Neuropeptide K">
    <location>
        <begin position="72"/>
        <end position="107"/>
    </location>
</feature>
<feature type="peptide" id="PRO_0000033532" description="Neuropeptide gamma, 1st part">
    <location>
        <begin position="72"/>
        <end position="73"/>
    </location>
</feature>
<feature type="peptide" id="PRO_0000033533" description="Neuropeptide gamma, 2nd part">
    <location>
        <begin position="89"/>
        <end position="107"/>
    </location>
</feature>
<feature type="peptide" id="PRO_0000033534" description="Neurokinin A">
    <location>
        <begin position="98"/>
        <end position="107"/>
    </location>
</feature>
<feature type="peptide" id="PRO_0000033535" description="C-terminal-flanking peptide">
    <location>
        <begin position="111"/>
        <end position="126"/>
    </location>
</feature>
<feature type="site" description="Cleavage; by FAP" evidence="2">
    <location>
        <begin position="59"/>
        <end position="60"/>
    </location>
</feature>
<feature type="site" description="Cleavage; by MME" evidence="5">
    <location>
        <begin position="63"/>
        <end position="64"/>
    </location>
</feature>
<feature type="site" description="Cleavage; by MME" evidence="5">
    <location>
        <begin position="64"/>
        <end position="65"/>
    </location>
</feature>
<feature type="site" description="Cleavage; by ACE" evidence="5">
    <location>
        <begin position="65"/>
        <end position="66"/>
    </location>
</feature>
<feature type="site" description="Cleavage; by ACE and MME" evidence="5">
    <location>
        <begin position="66"/>
        <end position="67"/>
    </location>
</feature>
<feature type="modified residue" description="Methionine amide" evidence="4">
    <location>
        <position position="68"/>
    </location>
</feature>
<feature type="modified residue" description="Methionine amide" evidence="3 4">
    <location>
        <position position="107"/>
    </location>
</feature>
<feature type="splice variant" id="VSP_006375" description="In isoform Gamma and isoform Delta." evidence="6 8">
    <location>
        <begin position="74"/>
        <end position="88"/>
    </location>
</feature>
<feature type="splice variant" id="VSP_006376" description="In isoform Alpha and isoform Delta." evidence="8">
    <location>
        <begin position="97"/>
        <end position="114"/>
    </location>
</feature>
<feature type="splice variant" id="VSP_006377" description="In isoform Alpha and isoform Delta." evidence="8">
    <original>V</original>
    <variation>M</variation>
    <location>
        <position position="115"/>
    </location>
</feature>
<feature type="sequence conflict" description="In Ref. 4; BAD96677." evidence="9" ref="4">
    <original>S</original>
    <variation>P</variation>
    <location>
        <position position="32"/>
    </location>
</feature>
<feature type="turn" evidence="12">
    <location>
        <begin position="59"/>
        <end position="62"/>
    </location>
</feature>
<feature type="turn" evidence="11">
    <location>
        <begin position="64"/>
        <end position="66"/>
    </location>
</feature>
<feature type="helix" evidence="10">
    <location>
        <begin position="73"/>
        <end position="80"/>
    </location>
</feature>
<feature type="helix" evidence="10">
    <location>
        <begin position="81"/>
        <end position="88"/>
    </location>
</feature>
<feature type="helix" evidence="10">
    <location>
        <begin position="89"/>
        <end position="91"/>
    </location>
</feature>
<feature type="helix" evidence="10">
    <location>
        <begin position="92"/>
        <end position="95"/>
    </location>
</feature>
<feature type="helix" evidence="10">
    <location>
        <begin position="98"/>
        <end position="101"/>
    </location>
</feature>
<feature type="helix" evidence="10">
    <location>
        <begin position="102"/>
        <end position="106"/>
    </location>
</feature>
<accession>P20366</accession>
<accession>O60600</accession>
<accession>O60601</accession>
<accession>Q00072</accession>
<accession>Q53GH4</accession>
<accession>Q549V0</accession>
<accession>Q549V1</accession>
<accession>Q549V2</accession>
<accession>Q6FHM1</accession>
<reference key="1">
    <citation type="journal article" date="1986" name="FEBS Lett.">
        <title>cDNA sequence of human beta-preprotachykinin, the common precursor to substance P and neurokinin A.</title>
        <authorList>
            <person name="Harmar A.J."/>
            <person name="Armstrong A."/>
            <person name="Pascall J.C."/>
            <person name="Chapman K."/>
            <person name="Rosie R."/>
            <person name="Curtis A."/>
            <person name="Going J."/>
            <person name="Edwards C.R.W."/>
            <person name="Fink G."/>
        </authorList>
    </citation>
    <scope>NUCLEOTIDE SEQUENCE [MRNA] (ISOFORM BETA)</scope>
    <scope>AMIDATION AT MET-68 AND MET-107</scope>
</reference>
<reference key="2">
    <citation type="submission" date="2004-05" db="EMBL/GenBank/DDBJ databases">
        <title>Cloning of human full open reading frames in Gateway(TM) system entry vector (pDONR201).</title>
        <authorList>
            <person name="Ebert L."/>
            <person name="Schick M."/>
            <person name="Neubert P."/>
            <person name="Schatten R."/>
            <person name="Henze S."/>
            <person name="Korn B."/>
        </authorList>
    </citation>
    <scope>NUCLEOTIDE SEQUENCE [LARGE SCALE MRNA] (ISOFORM BETA)</scope>
</reference>
<reference key="3">
    <citation type="submission" date="1995-10" db="EMBL/GenBank/DDBJ databases">
        <authorList>
            <person name="Tan A."/>
            <person name="Too H.P."/>
        </authorList>
    </citation>
    <scope>NUCLEOTIDE SEQUENCE [MRNA] (ISOFORM BETA)</scope>
    <source>
        <tissue>Brain</tissue>
    </source>
</reference>
<reference key="4">
    <citation type="submission" date="2005-04" db="EMBL/GenBank/DDBJ databases">
        <authorList>
            <person name="Suzuki Y."/>
            <person name="Sugano S."/>
            <person name="Totoki Y."/>
            <person name="Toyoda A."/>
            <person name="Takeda T."/>
            <person name="Sakaki Y."/>
            <person name="Tanaka A."/>
            <person name="Yokoyama S."/>
        </authorList>
    </citation>
    <scope>NUCLEOTIDE SEQUENCE [LARGE SCALE MRNA] (ISOFORM BETA)</scope>
    <source>
        <tissue>Small intestine</tissue>
    </source>
</reference>
<reference key="5">
    <citation type="journal article" date="2003" name="Nature">
        <title>The DNA sequence of human chromosome 7.</title>
        <authorList>
            <person name="Hillier L.W."/>
            <person name="Fulton R.S."/>
            <person name="Fulton L.A."/>
            <person name="Graves T.A."/>
            <person name="Pepin K.H."/>
            <person name="Wagner-McPherson C."/>
            <person name="Layman D."/>
            <person name="Maas J."/>
            <person name="Jaeger S."/>
            <person name="Walker R."/>
            <person name="Wylie K."/>
            <person name="Sekhon M."/>
            <person name="Becker M.C."/>
            <person name="O'Laughlin M.D."/>
            <person name="Schaller M.E."/>
            <person name="Fewell G.A."/>
            <person name="Delehaunty K.D."/>
            <person name="Miner T.L."/>
            <person name="Nash W.E."/>
            <person name="Cordes M."/>
            <person name="Du H."/>
            <person name="Sun H."/>
            <person name="Edwards J."/>
            <person name="Bradshaw-Cordum H."/>
            <person name="Ali J."/>
            <person name="Andrews S."/>
            <person name="Isak A."/>
            <person name="Vanbrunt A."/>
            <person name="Nguyen C."/>
            <person name="Du F."/>
            <person name="Lamar B."/>
            <person name="Courtney L."/>
            <person name="Kalicki J."/>
            <person name="Ozersky P."/>
            <person name="Bielicki L."/>
            <person name="Scott K."/>
            <person name="Holmes A."/>
            <person name="Harkins R."/>
            <person name="Harris A."/>
            <person name="Strong C.M."/>
            <person name="Hou S."/>
            <person name="Tomlinson C."/>
            <person name="Dauphin-Kohlberg S."/>
            <person name="Kozlowicz-Reilly A."/>
            <person name="Leonard S."/>
            <person name="Rohlfing T."/>
            <person name="Rock S.M."/>
            <person name="Tin-Wollam A.-M."/>
            <person name="Abbott A."/>
            <person name="Minx P."/>
            <person name="Maupin R."/>
            <person name="Strowmatt C."/>
            <person name="Latreille P."/>
            <person name="Miller N."/>
            <person name="Johnson D."/>
            <person name="Murray J."/>
            <person name="Woessner J.P."/>
            <person name="Wendl M.C."/>
            <person name="Yang S.-P."/>
            <person name="Schultz B.R."/>
            <person name="Wallis J.W."/>
            <person name="Spieth J."/>
            <person name="Bieri T.A."/>
            <person name="Nelson J.O."/>
            <person name="Berkowicz N."/>
            <person name="Wohldmann P.E."/>
            <person name="Cook L.L."/>
            <person name="Hickenbotham M.T."/>
            <person name="Eldred J."/>
            <person name="Williams D."/>
            <person name="Bedell J.A."/>
            <person name="Mardis E.R."/>
            <person name="Clifton S.W."/>
            <person name="Chissoe S.L."/>
            <person name="Marra M.A."/>
            <person name="Raymond C."/>
            <person name="Haugen E."/>
            <person name="Gillett W."/>
            <person name="Zhou Y."/>
            <person name="James R."/>
            <person name="Phelps K."/>
            <person name="Iadanoto S."/>
            <person name="Bubb K."/>
            <person name="Simms E."/>
            <person name="Levy R."/>
            <person name="Clendenning J."/>
            <person name="Kaul R."/>
            <person name="Kent W.J."/>
            <person name="Furey T.S."/>
            <person name="Baertsch R.A."/>
            <person name="Brent M.R."/>
            <person name="Keibler E."/>
            <person name="Flicek P."/>
            <person name="Bork P."/>
            <person name="Suyama M."/>
            <person name="Bailey J.A."/>
            <person name="Portnoy M.E."/>
            <person name="Torrents D."/>
            <person name="Chinwalla A.T."/>
            <person name="Gish W.R."/>
            <person name="Eddy S.R."/>
            <person name="McPherson J.D."/>
            <person name="Olson M.V."/>
            <person name="Eichler E.E."/>
            <person name="Green E.D."/>
            <person name="Waterston R.H."/>
            <person name="Wilson R.K."/>
        </authorList>
    </citation>
    <scope>NUCLEOTIDE SEQUENCE [LARGE SCALE GENOMIC DNA]</scope>
</reference>
<reference key="6">
    <citation type="journal article" date="2003" name="Science">
        <title>Human chromosome 7: DNA sequence and biology.</title>
        <authorList>
            <person name="Scherer S.W."/>
            <person name="Cheung J."/>
            <person name="MacDonald J.R."/>
            <person name="Osborne L.R."/>
            <person name="Nakabayashi K."/>
            <person name="Herbrick J.-A."/>
            <person name="Carson A.R."/>
            <person name="Parker-Katiraee L."/>
            <person name="Skaug J."/>
            <person name="Khaja R."/>
            <person name="Zhang J."/>
            <person name="Hudek A.K."/>
            <person name="Li M."/>
            <person name="Haddad M."/>
            <person name="Duggan G.E."/>
            <person name="Fernandez B.A."/>
            <person name="Kanematsu E."/>
            <person name="Gentles S."/>
            <person name="Christopoulos C.C."/>
            <person name="Choufani S."/>
            <person name="Kwasnicka D."/>
            <person name="Zheng X.H."/>
            <person name="Lai Z."/>
            <person name="Nusskern D.R."/>
            <person name="Zhang Q."/>
            <person name="Gu Z."/>
            <person name="Lu F."/>
            <person name="Zeesman S."/>
            <person name="Nowaczyk M.J."/>
            <person name="Teshima I."/>
            <person name="Chitayat D."/>
            <person name="Shuman C."/>
            <person name="Weksberg R."/>
            <person name="Zackai E.H."/>
            <person name="Grebe T.A."/>
            <person name="Cox S.R."/>
            <person name="Kirkpatrick S.J."/>
            <person name="Rahman N."/>
            <person name="Friedman J.M."/>
            <person name="Heng H.H.Q."/>
            <person name="Pelicci P.G."/>
            <person name="Lo-Coco F."/>
            <person name="Belloni E."/>
            <person name="Shaffer L.G."/>
            <person name="Pober B."/>
            <person name="Morton C.C."/>
            <person name="Gusella J.F."/>
            <person name="Bruns G.A.P."/>
            <person name="Korf B.R."/>
            <person name="Quade B.J."/>
            <person name="Ligon A.H."/>
            <person name="Ferguson H."/>
            <person name="Higgins A.W."/>
            <person name="Leach N.T."/>
            <person name="Herrick S.R."/>
            <person name="Lemyre E."/>
            <person name="Farra C.G."/>
            <person name="Kim H.-G."/>
            <person name="Summers A.M."/>
            <person name="Gripp K.W."/>
            <person name="Roberts W."/>
            <person name="Szatmari P."/>
            <person name="Winsor E.J.T."/>
            <person name="Grzeschik K.-H."/>
            <person name="Teebi A."/>
            <person name="Minassian B.A."/>
            <person name="Kere J."/>
            <person name="Armengol L."/>
            <person name="Pujana M.A."/>
            <person name="Estivill X."/>
            <person name="Wilson M.D."/>
            <person name="Koop B.F."/>
            <person name="Tosi S."/>
            <person name="Moore G.E."/>
            <person name="Boright A.P."/>
            <person name="Zlotorynski E."/>
            <person name="Kerem B."/>
            <person name="Kroisel P.M."/>
            <person name="Petek E."/>
            <person name="Oscier D.G."/>
            <person name="Mould S.J."/>
            <person name="Doehner H."/>
            <person name="Doehner K."/>
            <person name="Rommens J.M."/>
            <person name="Vincent J.B."/>
            <person name="Venter J.C."/>
            <person name="Li P.W."/>
            <person name="Mural R.J."/>
            <person name="Adams M.D."/>
            <person name="Tsui L.-C."/>
        </authorList>
    </citation>
    <scope>NUCLEOTIDE SEQUENCE [LARGE SCALE GENOMIC DNA]</scope>
</reference>
<reference key="7">
    <citation type="submission" date="2005-07" db="EMBL/GenBank/DDBJ databases">
        <authorList>
            <person name="Mural R.J."/>
            <person name="Istrail S."/>
            <person name="Sutton G."/>
            <person name="Florea L."/>
            <person name="Halpern A.L."/>
            <person name="Mobarry C.M."/>
            <person name="Lippert R."/>
            <person name="Walenz B."/>
            <person name="Shatkay H."/>
            <person name="Dew I."/>
            <person name="Miller J.R."/>
            <person name="Flanigan M.J."/>
            <person name="Edwards N.J."/>
            <person name="Bolanos R."/>
            <person name="Fasulo D."/>
            <person name="Halldorsson B.V."/>
            <person name="Hannenhalli S."/>
            <person name="Turner R."/>
            <person name="Yooseph S."/>
            <person name="Lu F."/>
            <person name="Nusskern D.R."/>
            <person name="Shue B.C."/>
            <person name="Zheng X.H."/>
            <person name="Zhong F."/>
            <person name="Delcher A.L."/>
            <person name="Huson D.H."/>
            <person name="Kravitz S.A."/>
            <person name="Mouchard L."/>
            <person name="Reinert K."/>
            <person name="Remington K.A."/>
            <person name="Clark A.G."/>
            <person name="Waterman M.S."/>
            <person name="Eichler E.E."/>
            <person name="Adams M.D."/>
            <person name="Hunkapiller M.W."/>
            <person name="Myers E.W."/>
            <person name="Venter J.C."/>
        </authorList>
    </citation>
    <scope>NUCLEOTIDE SEQUENCE [LARGE SCALE GENOMIC DNA]</scope>
</reference>
<reference key="8">
    <citation type="journal article" date="2004" name="Genome Res.">
        <title>The status, quality, and expansion of the NIH full-length cDNA project: the Mammalian Gene Collection (MGC).</title>
        <authorList>
            <consortium name="The MGC Project Team"/>
        </authorList>
    </citation>
    <scope>NUCLEOTIDE SEQUENCE [LARGE SCALE MRNA] (ISOFORM BETA)</scope>
    <source>
        <tissue>Brain</tissue>
    </source>
</reference>
<reference key="9">
    <citation type="journal article" date="1991" name="Endocrinology">
        <title>Tachykinin (substance-P) gene expression in Leydig cells of the human and mouse testis.</title>
        <authorList>
            <person name="Chiwakata C."/>
            <person name="Brackmann B."/>
            <person name="Hunt N."/>
            <person name="Davidoff M."/>
            <person name="Schulze W."/>
            <person name="Ivell R."/>
        </authorList>
    </citation>
    <scope>NUCLEOTIDE SEQUENCE [MRNA] OF 36-122 (ISOFORMS BETA AND GAMMA)</scope>
    <source>
        <tissue>Testis</tissue>
    </source>
</reference>
<reference key="10">
    <citation type="journal article" date="1987" name="Eur. J. Biochem.">
        <title>Isolation and characterization of neurokinin A, neurokinin A(3-10) and neurokinin A(4-10) from a neutral water extract of a metastatic ileal carcinoid tumour.</title>
        <authorList>
            <person name="Theodorsson-Norheim E."/>
            <person name="Joernvall H."/>
            <person name="Andersson M."/>
            <person name="Norheim I."/>
            <person name="Oeberg K."/>
            <person name="Jacobsson G."/>
        </authorList>
    </citation>
    <scope>PROTEIN SEQUENCE OF 98-107</scope>
    <scope>AMIDATION AT MET-107</scope>
</reference>
<reference key="11">
    <citation type="journal article" date="1998" name="J. Neuroimmunol.">
        <title>Identification of a delta isoform of preprotachykinin mRNA in human mononuclear phagocytes and lymphocytes.</title>
        <authorList>
            <person name="Lai J.P."/>
            <person name="Douglas S.D."/>
            <person name="Rappaport E."/>
            <person name="Wu J.M."/>
            <person name="Ho W.Z."/>
        </authorList>
    </citation>
    <scope>NUCLEOTIDE SEQUENCE [MRNA] OF 36-122 (ISOFORMS ALPHA; BETA AND DELTA)</scope>
    <source>
        <tissue>Blood</tissue>
        <tissue>Brain</tissue>
    </source>
</reference>
<reference key="12">
    <citation type="journal article" date="1990" name="Peptides">
        <title>Characterization of the C-terminal flanking peptide of human beta-preprotachykinin.</title>
        <authorList>
            <person name="McGregor G.P."/>
            <person name="Conlon J.M."/>
        </authorList>
    </citation>
    <scope>PROTEIN SEQUENCE OF 111-126</scope>
    <source>
        <tissue>Adrenal medulla</tissue>
    </source>
</reference>
<reference key="13">
    <citation type="journal article" date="1984" name="Peptides">
        <title>Hydrolysis of substance p and neurotensin by converting enzyme and neutral endopeptidase.</title>
        <authorList>
            <person name="Skidgel R.A."/>
            <person name="Engelbrecht S."/>
            <person name="Johnson A.R."/>
            <person name="Erdoes E.G."/>
        </authorList>
    </citation>
    <scope>CLEAVAGE BY ACE AND MME</scope>
</reference>
<reference key="14">
    <citation type="journal article" date="2011" name="FEBS J.">
        <title>Neuropeptide Y, B-type natriuretic peptide, substance P and peptide YY are novel substrates of fibroblast activation protein-alpha.</title>
        <authorList>
            <person name="Keane F.M."/>
            <person name="Nadvi N.A."/>
            <person name="Yao T.W."/>
            <person name="Gorrell M.D."/>
        </authorList>
    </citation>
    <scope>CLEAVAGE BY FAP</scope>
    <scope>CLEAVAGE SITE</scope>
</reference>
<reference key="15">
    <citation type="journal article" date="2006" name="Biochemistry">
        <title>Three-dimensional structure of neuropeptide K bound to dodecylphosphocholine micelles.</title>
        <authorList>
            <person name="Dike A."/>
            <person name="Cowsik S.M."/>
        </authorList>
    </citation>
    <scope>STRUCTURE BY NMR OF 72-107</scope>
</reference>
<dbReference type="EMBL" id="X54469">
    <property type="protein sequence ID" value="CAA38351.1"/>
    <property type="molecule type" value="mRNA"/>
</dbReference>
<dbReference type="EMBL" id="U37529">
    <property type="protein sequence ID" value="AAA79195.1"/>
    <property type="molecule type" value="mRNA"/>
</dbReference>
<dbReference type="EMBL" id="CR407602">
    <property type="protein sequence ID" value="CAG28529.1"/>
    <property type="molecule type" value="mRNA"/>
</dbReference>
<dbReference type="EMBL" id="CR541730">
    <property type="protein sequence ID" value="CAG46531.1"/>
    <property type="molecule type" value="mRNA"/>
</dbReference>
<dbReference type="EMBL" id="AK222957">
    <property type="protein sequence ID" value="BAD96677.1"/>
    <property type="molecule type" value="mRNA"/>
</dbReference>
<dbReference type="EMBL" id="AC004140">
    <property type="protein sequence ID" value="AAQ96888.1"/>
    <property type="molecule type" value="Genomic_DNA"/>
</dbReference>
<dbReference type="EMBL" id="AC004140">
    <property type="protein sequence ID" value="AAQ96889.1"/>
    <property type="molecule type" value="Genomic_DNA"/>
</dbReference>
<dbReference type="EMBL" id="AC004140">
    <property type="protein sequence ID" value="AAQ96890.1"/>
    <property type="molecule type" value="Genomic_DNA"/>
</dbReference>
<dbReference type="EMBL" id="AC004140">
    <property type="protein sequence ID" value="AAQ96891.1"/>
    <property type="molecule type" value="Genomic_DNA"/>
</dbReference>
<dbReference type="EMBL" id="CH236949">
    <property type="protein sequence ID" value="EAL24116.1"/>
    <property type="molecule type" value="Genomic_DNA"/>
</dbReference>
<dbReference type="EMBL" id="CH236949">
    <property type="protein sequence ID" value="EAL24117.1"/>
    <property type="molecule type" value="Genomic_DNA"/>
</dbReference>
<dbReference type="EMBL" id="CH236949">
    <property type="protein sequence ID" value="EAL24118.1"/>
    <property type="molecule type" value="Genomic_DNA"/>
</dbReference>
<dbReference type="EMBL" id="CH236949">
    <property type="protein sequence ID" value="EAL24119.1"/>
    <property type="molecule type" value="Genomic_DNA"/>
</dbReference>
<dbReference type="EMBL" id="CH471091">
    <property type="protein sequence ID" value="EAW76734.1"/>
    <property type="molecule type" value="Genomic_DNA"/>
</dbReference>
<dbReference type="EMBL" id="CH471091">
    <property type="protein sequence ID" value="EAW76735.1"/>
    <property type="molecule type" value="Genomic_DNA"/>
</dbReference>
<dbReference type="EMBL" id="CH471091">
    <property type="protein sequence ID" value="EAW76736.1"/>
    <property type="molecule type" value="Genomic_DNA"/>
</dbReference>
<dbReference type="EMBL" id="CH471091">
    <property type="protein sequence ID" value="EAW76737.1"/>
    <property type="molecule type" value="Genomic_DNA"/>
</dbReference>
<dbReference type="EMBL" id="BC018047">
    <property type="protein sequence ID" value="AAH18047.1"/>
    <property type="molecule type" value="mRNA"/>
</dbReference>
<dbReference type="EMBL" id="M68906">
    <property type="protein sequence ID" value="AAA60159.1"/>
    <property type="molecule type" value="mRNA"/>
</dbReference>
<dbReference type="EMBL" id="M68907">
    <property type="protein sequence ID" value="AAA60160.1"/>
    <property type="molecule type" value="mRNA"/>
</dbReference>
<dbReference type="EMBL" id="AF050655">
    <property type="protein sequence ID" value="AAC15701.1"/>
    <property type="molecule type" value="mRNA"/>
</dbReference>
<dbReference type="EMBL" id="AF050656">
    <property type="protein sequence ID" value="AAC15702.1"/>
    <property type="molecule type" value="mRNA"/>
</dbReference>
<dbReference type="EMBL" id="AF050658">
    <property type="protein sequence ID" value="AAC15704.1"/>
    <property type="molecule type" value="mRNA"/>
</dbReference>
<dbReference type="CCDS" id="CCDS5649.1">
    <molecule id="P20366-1"/>
</dbReference>
<dbReference type="CCDS" id="CCDS5650.1">
    <molecule id="P20366-2"/>
</dbReference>
<dbReference type="CCDS" id="CCDS5651.1">
    <molecule id="P20366-3"/>
</dbReference>
<dbReference type="PIR" id="A24805">
    <property type="entry name" value="SPHUB"/>
</dbReference>
<dbReference type="RefSeq" id="NP_003173.1">
    <molecule id="P20366-1"/>
    <property type="nucleotide sequence ID" value="NM_003182.3"/>
</dbReference>
<dbReference type="RefSeq" id="NP_054702.1">
    <molecule id="P20366-2"/>
    <property type="nucleotide sequence ID" value="NM_013996.3"/>
</dbReference>
<dbReference type="RefSeq" id="NP_054703.1">
    <molecule id="P20366-3"/>
    <property type="nucleotide sequence ID" value="NM_013997.3"/>
</dbReference>
<dbReference type="RefSeq" id="NP_054704.1">
    <molecule id="P20366-4"/>
    <property type="nucleotide sequence ID" value="NM_013998.3"/>
</dbReference>
<dbReference type="PDB" id="2B19">
    <property type="method" value="NMR"/>
    <property type="chains" value="A=72-107"/>
</dbReference>
<dbReference type="PDB" id="2KS9">
    <property type="method" value="NMR"/>
    <property type="chains" value="B=58-68"/>
</dbReference>
<dbReference type="PDB" id="2KSA">
    <property type="method" value="NMR"/>
    <property type="chains" value="B=58-68"/>
</dbReference>
<dbReference type="PDB" id="2KSB">
    <property type="method" value="NMR"/>
    <property type="chains" value="B=58-68"/>
</dbReference>
<dbReference type="PDB" id="4HOM">
    <property type="method" value="X-ray"/>
    <property type="resolution" value="1.90 A"/>
    <property type="chains" value="B=58-68"/>
</dbReference>
<dbReference type="PDB" id="7P00">
    <property type="method" value="EM"/>
    <property type="resolution" value="2.71 A"/>
    <property type="chains" value="P=58-68"/>
</dbReference>
<dbReference type="PDB" id="7P02">
    <property type="method" value="EM"/>
    <property type="resolution" value="2.87 A"/>
    <property type="chains" value="P=58-68"/>
</dbReference>
<dbReference type="PDB" id="7RMG">
    <property type="method" value="EM"/>
    <property type="resolution" value="3.00 A"/>
    <property type="chains" value="S=58-68"/>
</dbReference>
<dbReference type="PDB" id="7RMH">
    <property type="method" value="EM"/>
    <property type="resolution" value="3.10 A"/>
    <property type="chains" value="S=58-68"/>
</dbReference>
<dbReference type="PDB" id="7VDM">
    <property type="method" value="EM"/>
    <property type="resolution" value="2.98 A"/>
    <property type="chains" value="L=58-68"/>
</dbReference>
<dbReference type="PDB" id="7XWO">
    <property type="method" value="EM"/>
    <property type="resolution" value="2.70 A"/>
    <property type="chains" value="D=98-107"/>
</dbReference>
<dbReference type="PDB" id="8JBH">
    <property type="method" value="EM"/>
    <property type="resolution" value="2.90 A"/>
    <property type="chains" value="A=58-68"/>
</dbReference>
<dbReference type="PDB" id="8U26">
    <property type="method" value="EM"/>
    <property type="resolution" value="2.50 A"/>
    <property type="chains" value="S=58-68"/>
</dbReference>
<dbReference type="PDBsum" id="2B19"/>
<dbReference type="PDBsum" id="2KS9"/>
<dbReference type="PDBsum" id="2KSA"/>
<dbReference type="PDBsum" id="2KSB"/>
<dbReference type="PDBsum" id="4HOM"/>
<dbReference type="PDBsum" id="7P00"/>
<dbReference type="PDBsum" id="7P02"/>
<dbReference type="PDBsum" id="7RMG"/>
<dbReference type="PDBsum" id="7RMH"/>
<dbReference type="PDBsum" id="7VDM"/>
<dbReference type="PDBsum" id="7XWO"/>
<dbReference type="PDBsum" id="8JBH"/>
<dbReference type="PDBsum" id="8U26"/>
<dbReference type="EMDB" id="EMD-13140"/>
<dbReference type="EMDB" id="EMD-13141"/>
<dbReference type="EMDB" id="EMD-24569"/>
<dbReference type="EMDB" id="EMD-24570"/>
<dbReference type="EMDB" id="EMD-31923"/>
<dbReference type="EMDB" id="EMD-36146"/>
<dbReference type="EMDB" id="EMD-41840"/>
<dbReference type="SMR" id="P20366"/>
<dbReference type="BioGRID" id="112727">
    <property type="interactions" value="7"/>
</dbReference>
<dbReference type="FunCoup" id="P20366">
    <property type="interactions" value="695"/>
</dbReference>
<dbReference type="IntAct" id="P20366">
    <property type="interactions" value="13"/>
</dbReference>
<dbReference type="MINT" id="P20366"/>
<dbReference type="STRING" id="9606.ENSP00000321106"/>
<dbReference type="BindingDB" id="P20366"/>
<dbReference type="PhosphoSitePlus" id="P20366"/>
<dbReference type="BioMuta" id="TAC1"/>
<dbReference type="DMDM" id="135886"/>
<dbReference type="jPOST" id="P20366"/>
<dbReference type="MassIVE" id="P20366"/>
<dbReference type="PaxDb" id="9606-ENSP00000321106"/>
<dbReference type="PeptideAtlas" id="P20366"/>
<dbReference type="ProteomicsDB" id="53754">
    <molecule id="P20366-1"/>
</dbReference>
<dbReference type="ProteomicsDB" id="53755">
    <molecule id="P20366-2"/>
</dbReference>
<dbReference type="ProteomicsDB" id="53756">
    <molecule id="P20366-3"/>
</dbReference>
<dbReference type="ProteomicsDB" id="53757">
    <molecule id="P20366-4"/>
</dbReference>
<dbReference type="Antibodypedia" id="2784">
    <property type="antibodies" value="590 antibodies from 39 providers"/>
</dbReference>
<dbReference type="DNASU" id="6863"/>
<dbReference type="Ensembl" id="ENST00000319273.10">
    <molecule id="P20366-1"/>
    <property type="protein sequence ID" value="ENSP00000321106.5"/>
    <property type="gene ID" value="ENSG00000006128.12"/>
</dbReference>
<dbReference type="Ensembl" id="ENST00000346867.4">
    <molecule id="P20366-3"/>
    <property type="protein sequence ID" value="ENSP00000289574.4"/>
    <property type="gene ID" value="ENSG00000006128.12"/>
</dbReference>
<dbReference type="Ensembl" id="ENST00000350485.8">
    <molecule id="P20366-2"/>
    <property type="protein sequence ID" value="ENSP00000289576.4"/>
    <property type="gene ID" value="ENSG00000006128.12"/>
</dbReference>
<dbReference type="GeneID" id="6863"/>
<dbReference type="KEGG" id="hsa:6863"/>
<dbReference type="MANE-Select" id="ENST00000319273.10">
    <property type="protein sequence ID" value="ENSP00000321106.5"/>
    <property type="RefSeq nucleotide sequence ID" value="NM_003182.3"/>
    <property type="RefSeq protein sequence ID" value="NP_003173.1"/>
</dbReference>
<dbReference type="UCSC" id="uc003uop.5">
    <molecule id="P20366-1"/>
    <property type="organism name" value="human"/>
</dbReference>
<dbReference type="AGR" id="HGNC:11517"/>
<dbReference type="CTD" id="6863"/>
<dbReference type="DisGeNET" id="6863"/>
<dbReference type="GeneCards" id="TAC1"/>
<dbReference type="HGNC" id="HGNC:11517">
    <property type="gene designation" value="TAC1"/>
</dbReference>
<dbReference type="HPA" id="ENSG00000006128">
    <property type="expression patterns" value="Tissue enriched (brain)"/>
</dbReference>
<dbReference type="MIM" id="162320">
    <property type="type" value="gene"/>
</dbReference>
<dbReference type="neXtProt" id="NX_P20366"/>
<dbReference type="OpenTargets" id="ENSG00000006128"/>
<dbReference type="PharmGKB" id="PA36297"/>
<dbReference type="VEuPathDB" id="HostDB:ENSG00000006128"/>
<dbReference type="eggNOG" id="ENOG502S1KJ">
    <property type="taxonomic scope" value="Eukaryota"/>
</dbReference>
<dbReference type="GeneTree" id="ENSGT00390000002457"/>
<dbReference type="HOGENOM" id="CLU_149426_0_0_1"/>
<dbReference type="InParanoid" id="P20366"/>
<dbReference type="OMA" id="GQMSHKR"/>
<dbReference type="OrthoDB" id="9936276at2759"/>
<dbReference type="PAN-GO" id="P20366">
    <property type="GO annotations" value="5 GO annotations based on evolutionary models"/>
</dbReference>
<dbReference type="PhylomeDB" id="P20366"/>
<dbReference type="TreeFam" id="TF333405"/>
<dbReference type="PathwayCommons" id="P20366"/>
<dbReference type="Reactome" id="R-HSA-380095">
    <property type="pathway name" value="Tachykinin receptors bind tachykinins"/>
</dbReference>
<dbReference type="Reactome" id="R-HSA-416476">
    <property type="pathway name" value="G alpha (q) signalling events"/>
</dbReference>
<dbReference type="SignaLink" id="P20366"/>
<dbReference type="SIGNOR" id="P20366"/>
<dbReference type="BioGRID-ORCS" id="6863">
    <property type="hits" value="10 hits in 1139 CRISPR screens"/>
</dbReference>
<dbReference type="EvolutionaryTrace" id="P20366"/>
<dbReference type="GeneWiki" id="TAC1"/>
<dbReference type="GenomeRNAi" id="6863"/>
<dbReference type="Pharos" id="P20366">
    <property type="development level" value="Tbio"/>
</dbReference>
<dbReference type="PRO" id="PR:P20366"/>
<dbReference type="Proteomes" id="UP000005640">
    <property type="component" value="Chromosome 7"/>
</dbReference>
<dbReference type="RNAct" id="P20366">
    <property type="molecule type" value="protein"/>
</dbReference>
<dbReference type="Bgee" id="ENSG00000006128">
    <property type="expression patterns" value="Expressed in dorsal root ganglion and 143 other cell types or tissues"/>
</dbReference>
<dbReference type="GO" id="GO:0030424">
    <property type="term" value="C:axon"/>
    <property type="evidence" value="ECO:0007669"/>
    <property type="project" value="Ensembl"/>
</dbReference>
<dbReference type="GO" id="GO:0005576">
    <property type="term" value="C:extracellular region"/>
    <property type="evidence" value="ECO:0000304"/>
    <property type="project" value="Reactome"/>
</dbReference>
<dbReference type="GO" id="GO:0005615">
    <property type="term" value="C:extracellular space"/>
    <property type="evidence" value="ECO:0000318"/>
    <property type="project" value="GO_Central"/>
</dbReference>
<dbReference type="GO" id="GO:0043025">
    <property type="term" value="C:neuronal cell body"/>
    <property type="evidence" value="ECO:0007669"/>
    <property type="project" value="Ensembl"/>
</dbReference>
<dbReference type="GO" id="GO:0098992">
    <property type="term" value="C:neuronal dense core vesicle"/>
    <property type="evidence" value="ECO:0007669"/>
    <property type="project" value="Ensembl"/>
</dbReference>
<dbReference type="GO" id="GO:0045202">
    <property type="term" value="C:synapse"/>
    <property type="evidence" value="ECO:0007669"/>
    <property type="project" value="GOC"/>
</dbReference>
<dbReference type="GO" id="GO:0031835">
    <property type="term" value="F:substance P receptor binding"/>
    <property type="evidence" value="ECO:0000318"/>
    <property type="project" value="GO_Central"/>
</dbReference>
<dbReference type="GO" id="GO:0008306">
    <property type="term" value="P:associative learning"/>
    <property type="evidence" value="ECO:0007669"/>
    <property type="project" value="Ensembl"/>
</dbReference>
<dbReference type="GO" id="GO:0007267">
    <property type="term" value="P:cell-cell signaling"/>
    <property type="evidence" value="ECO:0000304"/>
    <property type="project" value="ProtInc"/>
</dbReference>
<dbReference type="GO" id="GO:1990090">
    <property type="term" value="P:cellular response to nerve growth factor stimulus"/>
    <property type="evidence" value="ECO:0007669"/>
    <property type="project" value="Ensembl"/>
</dbReference>
<dbReference type="GO" id="GO:0007268">
    <property type="term" value="P:chemical synaptic transmission"/>
    <property type="evidence" value="ECO:0007669"/>
    <property type="project" value="UniProtKB-KW"/>
</dbReference>
<dbReference type="GO" id="GO:0009582">
    <property type="term" value="P:detection of abiotic stimulus"/>
    <property type="evidence" value="ECO:0000304"/>
    <property type="project" value="ProtInc"/>
</dbReference>
<dbReference type="GO" id="GO:0006954">
    <property type="term" value="P:inflammatory response"/>
    <property type="evidence" value="ECO:0000318"/>
    <property type="project" value="GO_Central"/>
</dbReference>
<dbReference type="GO" id="GO:0007320">
    <property type="term" value="P:insemination"/>
    <property type="evidence" value="ECO:0000304"/>
    <property type="project" value="ProtInc"/>
</dbReference>
<dbReference type="GO" id="GO:0007616">
    <property type="term" value="P:long-term memory"/>
    <property type="evidence" value="ECO:0007669"/>
    <property type="project" value="Ensembl"/>
</dbReference>
<dbReference type="GO" id="GO:0010459">
    <property type="term" value="P:negative regulation of heart rate"/>
    <property type="evidence" value="ECO:0007669"/>
    <property type="project" value="Ensembl"/>
</dbReference>
<dbReference type="GO" id="GO:0007218">
    <property type="term" value="P:neuropeptide signaling pathway"/>
    <property type="evidence" value="ECO:0007669"/>
    <property type="project" value="UniProtKB-KW"/>
</dbReference>
<dbReference type="GO" id="GO:0045760">
    <property type="term" value="P:positive regulation of action potential"/>
    <property type="evidence" value="ECO:0007669"/>
    <property type="project" value="Ensembl"/>
</dbReference>
<dbReference type="GO" id="GO:0002675">
    <property type="term" value="P:positive regulation of acute inflammatory response"/>
    <property type="evidence" value="ECO:0007669"/>
    <property type="project" value="Ensembl"/>
</dbReference>
<dbReference type="GO" id="GO:2000854">
    <property type="term" value="P:positive regulation of corticosterone secretion"/>
    <property type="evidence" value="ECO:0007669"/>
    <property type="project" value="Ensembl"/>
</dbReference>
<dbReference type="GO" id="GO:0007204">
    <property type="term" value="P:positive regulation of cytosolic calcium ion concentration"/>
    <property type="evidence" value="ECO:0000314"/>
    <property type="project" value="UniProtKB"/>
</dbReference>
<dbReference type="GO" id="GO:0010634">
    <property type="term" value="P:positive regulation of epithelial cell migration"/>
    <property type="evidence" value="ECO:0007669"/>
    <property type="project" value="Ensembl"/>
</dbReference>
<dbReference type="GO" id="GO:0050671">
    <property type="term" value="P:positive regulation of lymphocyte proliferation"/>
    <property type="evidence" value="ECO:0007669"/>
    <property type="project" value="Ensembl"/>
</dbReference>
<dbReference type="GO" id="GO:0045778">
    <property type="term" value="P:positive regulation of ossification"/>
    <property type="evidence" value="ECO:0007669"/>
    <property type="project" value="Ensembl"/>
</dbReference>
<dbReference type="GO" id="GO:0051496">
    <property type="term" value="P:positive regulation of stress fiber assembly"/>
    <property type="evidence" value="ECO:0007669"/>
    <property type="project" value="Ensembl"/>
</dbReference>
<dbReference type="GO" id="GO:0032224">
    <property type="term" value="P:positive regulation of synaptic transmission, cholinergic"/>
    <property type="evidence" value="ECO:0007669"/>
    <property type="project" value="Ensembl"/>
</dbReference>
<dbReference type="GO" id="GO:0032230">
    <property type="term" value="P:positive regulation of synaptic transmission, GABAergic"/>
    <property type="evidence" value="ECO:0007669"/>
    <property type="project" value="Ensembl"/>
</dbReference>
<dbReference type="GO" id="GO:0008217">
    <property type="term" value="P:regulation of blood pressure"/>
    <property type="evidence" value="ECO:0007669"/>
    <property type="project" value="Ensembl"/>
</dbReference>
<dbReference type="GO" id="GO:0009725">
    <property type="term" value="P:response to hormone"/>
    <property type="evidence" value="ECO:0007669"/>
    <property type="project" value="Ensembl"/>
</dbReference>
<dbReference type="GO" id="GO:0032496">
    <property type="term" value="P:response to lipopolysaccharide"/>
    <property type="evidence" value="ECO:0007669"/>
    <property type="project" value="Ensembl"/>
</dbReference>
<dbReference type="GO" id="GO:0048265">
    <property type="term" value="P:response to pain"/>
    <property type="evidence" value="ECO:0007669"/>
    <property type="project" value="Ensembl"/>
</dbReference>
<dbReference type="GO" id="GO:0019233">
    <property type="term" value="P:sensory perception of pain"/>
    <property type="evidence" value="ECO:0007669"/>
    <property type="project" value="Ensembl"/>
</dbReference>
<dbReference type="GO" id="GO:0007217">
    <property type="term" value="P:tachykinin receptor signaling pathway"/>
    <property type="evidence" value="ECO:0000318"/>
    <property type="project" value="GO_Central"/>
</dbReference>
<dbReference type="InterPro" id="IPR013055">
    <property type="entry name" value="Tachy_Neuro_lke_CS"/>
</dbReference>
<dbReference type="InterPro" id="IPR008215">
    <property type="entry name" value="Tachykinin_dom"/>
</dbReference>
<dbReference type="InterPro" id="IPR008216">
    <property type="entry name" value="Tachykinin_fam"/>
</dbReference>
<dbReference type="PANTHER" id="PTHR11250:SF3">
    <property type="entry name" value="PROTACHYKININ-1"/>
    <property type="match status" value="1"/>
</dbReference>
<dbReference type="PANTHER" id="PTHR11250">
    <property type="entry name" value="TACHYKININ"/>
    <property type="match status" value="1"/>
</dbReference>
<dbReference type="Pfam" id="PF02202">
    <property type="entry name" value="Tachykinin"/>
    <property type="match status" value="1"/>
</dbReference>
<dbReference type="PRINTS" id="PR01829">
    <property type="entry name" value="PROTACHYKNIN"/>
</dbReference>
<dbReference type="SMART" id="SM00203">
    <property type="entry name" value="TK"/>
    <property type="match status" value="2"/>
</dbReference>
<dbReference type="PROSITE" id="PS00267">
    <property type="entry name" value="TACHYKININ"/>
    <property type="match status" value="2"/>
</dbReference>
<comment type="function">
    <text>Tachykinins are active peptides which excite neurons, evoke behavioral responses, are potent vasodilators and secretagogues, and contract (directly or indirectly) many smooth muscles.</text>
</comment>
<comment type="interaction">
    <interactant intactId="EBI-6655360">
        <id>PRO_0000033530</id>
    </interactant>
    <interactant intactId="EBI-6655287">
        <id>P25103</id>
        <label>TACR1</label>
    </interactant>
    <organismsDiffer>false</organismsDiffer>
    <experiments>2</experiments>
</comment>
<comment type="interaction">
    <interactant intactId="EBI-6655449">
        <id>PRO_0000033534</id>
    </interactant>
    <interactant intactId="EBI-6655413">
        <id>P21452</id>
        <label>TACR2</label>
    </interactant>
    <organismsDiffer>false</organismsDiffer>
    <experiments>2</experiments>
</comment>
<comment type="subcellular location">
    <subcellularLocation>
        <location>Secreted</location>
    </subcellularLocation>
</comment>
<comment type="alternative products">
    <event type="alternative splicing"/>
    <isoform>
        <id>P20366-1</id>
        <name>Beta</name>
        <sequence type="displayed"/>
    </isoform>
    <isoform>
        <id>P20366-2</id>
        <name>Alpha</name>
        <sequence type="described" ref="VSP_006376 VSP_006377"/>
    </isoform>
    <isoform>
        <id>P20366-3</id>
        <name>Gamma</name>
        <sequence type="described" ref="VSP_006375"/>
    </isoform>
    <isoform>
        <id>P20366-4</id>
        <name>Delta</name>
        <sequence type="described" ref="VSP_006375 VSP_006376 VSP_006377"/>
    </isoform>
</comment>
<comment type="PTM">
    <molecule>Substance P</molecule>
    <text evidence="2 5">The substance P form is cleaved at Pro-59 by the prolyl endopeptidase FAP (seprase) activity (in vitro) (PubMed:21314817). Substance P is also cleaved and degraded by Angiotensin-converting enzyme (ACE) and neprilysin (MME) (PubMed:6208535).</text>
</comment>
<comment type="similarity">
    <text evidence="9">Belongs to the tachykinin family.</text>
</comment>
<comment type="online information" name="Wikipedia">
    <link uri="https://en.wikipedia.org/wiki/Neurokinin_1"/>
    <text>Neurokinin-1 entry</text>
</comment>
<comment type="online information" name="Atlas of Genetics and Cytogenetics in Oncology and Haematology">
    <link uri="https://atlasgeneticsoncology.org/gene/44483/TAC1"/>
</comment>
<gene>
    <name type="primary">TAC1</name>
    <name type="synonym">NKA</name>
    <name type="synonym">NKNA</name>
    <name type="synonym">TAC2</name>
</gene>
<protein>
    <recommendedName>
        <fullName>Protachykinin-1</fullName>
    </recommendedName>
    <alternativeName>
        <fullName>PPT</fullName>
    </alternativeName>
    <component>
        <recommendedName>
            <fullName evidence="7">Substance P</fullName>
        </recommendedName>
    </component>
    <component>
        <recommendedName>
            <fullName>Neurokinin A</fullName>
            <shortName>NKA</shortName>
        </recommendedName>
        <alternativeName>
            <fullName>Neuromedin L</fullName>
        </alternativeName>
        <alternativeName>
            <fullName>Substance K</fullName>
        </alternativeName>
    </component>
    <component>
        <recommendedName>
            <fullName>Neuropeptide K</fullName>
            <shortName>NPK</shortName>
        </recommendedName>
    </component>
    <component>
        <recommendedName>
            <fullName>Neuropeptide gamma</fullName>
        </recommendedName>
    </component>
    <component>
        <recommendedName>
            <fullName>C-terminal-flanking peptide</fullName>
        </recommendedName>
    </component>
</protein>